<keyword id="KW-0413">Isomerase</keyword>
<keyword id="KW-0819">tRNA processing</keyword>
<dbReference type="EC" id="5.4.99.25" evidence="1"/>
<dbReference type="EMBL" id="BA000001">
    <property type="protein sequence ID" value="BAA30756.1"/>
    <property type="molecule type" value="Genomic_DNA"/>
</dbReference>
<dbReference type="PIR" id="D71044">
    <property type="entry name" value="D71044"/>
</dbReference>
<dbReference type="RefSeq" id="WP_010885712.1">
    <property type="nucleotide sequence ID" value="NC_000961.1"/>
</dbReference>
<dbReference type="SMR" id="O59357"/>
<dbReference type="STRING" id="70601.gene:9378637"/>
<dbReference type="EnsemblBacteria" id="BAA30756">
    <property type="protein sequence ID" value="BAA30756"/>
    <property type="gene ID" value="BAA30756"/>
</dbReference>
<dbReference type="GeneID" id="1442493"/>
<dbReference type="KEGG" id="pho:PH1644"/>
<dbReference type="eggNOG" id="arCOG00987">
    <property type="taxonomic scope" value="Archaea"/>
</dbReference>
<dbReference type="OrthoDB" id="35866at2157"/>
<dbReference type="Proteomes" id="UP000000752">
    <property type="component" value="Chromosome"/>
</dbReference>
<dbReference type="GO" id="GO:0003723">
    <property type="term" value="F:RNA binding"/>
    <property type="evidence" value="ECO:0007669"/>
    <property type="project" value="InterPro"/>
</dbReference>
<dbReference type="GO" id="GO:0160148">
    <property type="term" value="F:tRNA pseudouridine(55) synthase activity"/>
    <property type="evidence" value="ECO:0007669"/>
    <property type="project" value="UniProtKB-EC"/>
</dbReference>
<dbReference type="GO" id="GO:0000495">
    <property type="term" value="P:box H/ACA sno(s)RNA 3'-end processing"/>
    <property type="evidence" value="ECO:0007669"/>
    <property type="project" value="TreeGrafter"/>
</dbReference>
<dbReference type="GO" id="GO:1990481">
    <property type="term" value="P:mRNA pseudouridine synthesis"/>
    <property type="evidence" value="ECO:0007669"/>
    <property type="project" value="TreeGrafter"/>
</dbReference>
<dbReference type="GO" id="GO:0031118">
    <property type="term" value="P:rRNA pseudouridine synthesis"/>
    <property type="evidence" value="ECO:0007669"/>
    <property type="project" value="TreeGrafter"/>
</dbReference>
<dbReference type="GO" id="GO:0031120">
    <property type="term" value="P:snRNA pseudouridine synthesis"/>
    <property type="evidence" value="ECO:0007669"/>
    <property type="project" value="TreeGrafter"/>
</dbReference>
<dbReference type="GO" id="GO:0031119">
    <property type="term" value="P:tRNA pseudouridine synthesis"/>
    <property type="evidence" value="ECO:0007669"/>
    <property type="project" value="UniProtKB-UniRule"/>
</dbReference>
<dbReference type="CDD" id="cd02572">
    <property type="entry name" value="PseudoU_synth_hDyskerin"/>
    <property type="match status" value="1"/>
</dbReference>
<dbReference type="CDD" id="cd21148">
    <property type="entry name" value="PUA_Cbf5"/>
    <property type="match status" value="1"/>
</dbReference>
<dbReference type="FunFam" id="3.30.2350.10:FF:000001">
    <property type="entry name" value="H/ACA ribonucleoprotein complex subunit CBF5"/>
    <property type="match status" value="1"/>
</dbReference>
<dbReference type="FunFam" id="2.30.130.10:FF:000010">
    <property type="entry name" value="Probable tRNA pseudouridine synthase B"/>
    <property type="match status" value="1"/>
</dbReference>
<dbReference type="Gene3D" id="3.30.2350.10">
    <property type="entry name" value="Pseudouridine synthase"/>
    <property type="match status" value="1"/>
</dbReference>
<dbReference type="Gene3D" id="2.30.130.10">
    <property type="entry name" value="PUA domain"/>
    <property type="match status" value="1"/>
</dbReference>
<dbReference type="HAMAP" id="MF_01081">
    <property type="entry name" value="TruB_arch"/>
    <property type="match status" value="1"/>
</dbReference>
<dbReference type="InterPro" id="IPR012960">
    <property type="entry name" value="Dyskerin-like"/>
</dbReference>
<dbReference type="InterPro" id="IPR020103">
    <property type="entry name" value="PsdUridine_synth_cat_dom_sf"/>
</dbReference>
<dbReference type="InterPro" id="IPR002501">
    <property type="entry name" value="PsdUridine_synth_N"/>
</dbReference>
<dbReference type="InterPro" id="IPR002478">
    <property type="entry name" value="PUA"/>
</dbReference>
<dbReference type="InterPro" id="IPR015947">
    <property type="entry name" value="PUA-like_sf"/>
</dbReference>
<dbReference type="InterPro" id="IPR036974">
    <property type="entry name" value="PUA_sf"/>
</dbReference>
<dbReference type="InterPro" id="IPR004802">
    <property type="entry name" value="tRNA_PsdUridine_synth_B_fam"/>
</dbReference>
<dbReference type="InterPro" id="IPR026326">
    <property type="entry name" value="TruB_arch"/>
</dbReference>
<dbReference type="InterPro" id="IPR032819">
    <property type="entry name" value="TruB_C"/>
</dbReference>
<dbReference type="InterPro" id="IPR004521">
    <property type="entry name" value="Uncharacterised_CHP00451"/>
</dbReference>
<dbReference type="NCBIfam" id="TIGR00425">
    <property type="entry name" value="CBF5"/>
    <property type="match status" value="1"/>
</dbReference>
<dbReference type="NCBIfam" id="NF003280">
    <property type="entry name" value="PRK04270.1"/>
    <property type="match status" value="1"/>
</dbReference>
<dbReference type="NCBIfam" id="TIGR00451">
    <property type="entry name" value="unchar_dom_2"/>
    <property type="match status" value="1"/>
</dbReference>
<dbReference type="PANTHER" id="PTHR23127">
    <property type="entry name" value="CENTROMERE/MICROTUBULE BINDING PROTEIN CBF5"/>
    <property type="match status" value="1"/>
</dbReference>
<dbReference type="PANTHER" id="PTHR23127:SF0">
    <property type="entry name" value="H_ACA RIBONUCLEOPROTEIN COMPLEX SUBUNIT DKC1"/>
    <property type="match status" value="1"/>
</dbReference>
<dbReference type="Pfam" id="PF08068">
    <property type="entry name" value="DKCLD"/>
    <property type="match status" value="1"/>
</dbReference>
<dbReference type="Pfam" id="PF01472">
    <property type="entry name" value="PUA"/>
    <property type="match status" value="1"/>
</dbReference>
<dbReference type="Pfam" id="PF16198">
    <property type="entry name" value="TruB_C_2"/>
    <property type="match status" value="1"/>
</dbReference>
<dbReference type="Pfam" id="PF01509">
    <property type="entry name" value="TruB_N"/>
    <property type="match status" value="1"/>
</dbReference>
<dbReference type="SMART" id="SM01136">
    <property type="entry name" value="DKCLD"/>
    <property type="match status" value="1"/>
</dbReference>
<dbReference type="SMART" id="SM00359">
    <property type="entry name" value="PUA"/>
    <property type="match status" value="1"/>
</dbReference>
<dbReference type="SUPFAM" id="SSF55120">
    <property type="entry name" value="Pseudouridine synthase"/>
    <property type="match status" value="1"/>
</dbReference>
<dbReference type="SUPFAM" id="SSF88697">
    <property type="entry name" value="PUA domain-like"/>
    <property type="match status" value="1"/>
</dbReference>
<dbReference type="PROSITE" id="PS50890">
    <property type="entry name" value="PUA"/>
    <property type="match status" value="1"/>
</dbReference>
<proteinExistence type="inferred from homology"/>
<accession>O59357</accession>
<protein>
    <recommendedName>
        <fullName evidence="1">Probable tRNA pseudouridine synthase B</fullName>
        <ecNumber evidence="1">5.4.99.25</ecNumber>
    </recommendedName>
    <alternativeName>
        <fullName evidence="1">tRNA pseudouridine(55) synthase</fullName>
        <shortName evidence="1">Psi55 synthase</shortName>
    </alternativeName>
    <alternativeName>
        <fullName evidence="1">tRNA pseudouridylate synthase</fullName>
    </alternativeName>
    <alternativeName>
        <fullName evidence="1">tRNA-uridine isomerase</fullName>
    </alternativeName>
</protein>
<reference key="1">
    <citation type="journal article" date="1998" name="DNA Res.">
        <title>Complete sequence and gene organization of the genome of a hyper-thermophilic archaebacterium, Pyrococcus horikoshii OT3.</title>
        <authorList>
            <person name="Kawarabayasi Y."/>
            <person name="Sawada M."/>
            <person name="Horikawa H."/>
            <person name="Haikawa Y."/>
            <person name="Hino Y."/>
            <person name="Yamamoto S."/>
            <person name="Sekine M."/>
            <person name="Baba S."/>
            <person name="Kosugi H."/>
            <person name="Hosoyama A."/>
            <person name="Nagai Y."/>
            <person name="Sakai M."/>
            <person name="Ogura K."/>
            <person name="Otsuka R."/>
            <person name="Nakazawa H."/>
            <person name="Takamiya M."/>
            <person name="Ohfuku Y."/>
            <person name="Funahashi T."/>
            <person name="Tanaka T."/>
            <person name="Kudoh Y."/>
            <person name="Yamazaki J."/>
            <person name="Kushida N."/>
            <person name="Oguchi A."/>
            <person name="Aoki K."/>
            <person name="Yoshizawa T."/>
            <person name="Nakamura Y."/>
            <person name="Robb F.T."/>
            <person name="Horikoshi K."/>
            <person name="Masuchi Y."/>
            <person name="Shizuya H."/>
            <person name="Kikuchi H."/>
        </authorList>
    </citation>
    <scope>NUCLEOTIDE SEQUENCE [LARGE SCALE GENOMIC DNA]</scope>
    <source>
        <strain>ATCC 700860 / DSM 12428 / JCM 9974 / NBRC 100139 / OT-3</strain>
    </source>
</reference>
<name>TRUB_PYRHO</name>
<evidence type="ECO:0000255" key="1">
    <source>
        <dbReference type="HAMAP-Rule" id="MF_01081"/>
    </source>
</evidence>
<organism>
    <name type="scientific">Pyrococcus horikoshii (strain ATCC 700860 / DSM 12428 / JCM 9974 / NBRC 100139 / OT-3)</name>
    <dbReference type="NCBI Taxonomy" id="70601"/>
    <lineage>
        <taxon>Archaea</taxon>
        <taxon>Methanobacteriati</taxon>
        <taxon>Methanobacteriota</taxon>
        <taxon>Thermococci</taxon>
        <taxon>Thermococcales</taxon>
        <taxon>Thermococcaceae</taxon>
        <taxon>Pyrococcus</taxon>
    </lineage>
</organism>
<comment type="function">
    <text evidence="1">Could be responsible for synthesis of pseudouridine from uracil-55 in the psi GC loop of transfer RNAs.</text>
</comment>
<comment type="catalytic activity">
    <reaction evidence="1">
        <text>uridine(55) in tRNA = pseudouridine(55) in tRNA</text>
        <dbReference type="Rhea" id="RHEA:42532"/>
        <dbReference type="Rhea" id="RHEA-COMP:10101"/>
        <dbReference type="Rhea" id="RHEA-COMP:10102"/>
        <dbReference type="ChEBI" id="CHEBI:65314"/>
        <dbReference type="ChEBI" id="CHEBI:65315"/>
        <dbReference type="EC" id="5.4.99.25"/>
    </reaction>
</comment>
<comment type="similarity">
    <text evidence="1">Belongs to the pseudouridine synthase TruB family. Type 2 subfamily.</text>
</comment>
<sequence length="334" mass="37853">MARDEVRRMLPADIKREVLIKDENAETNPKWGFPPYERPIELHIQYGVINLDKPPGPTSHEVVAWIKRILNLEKAGHGGTLDPKVSGVLPVALEKATRVVQALLPAGKEYVALMHLHGDVPENKIIDVMKEFEGEIIQRPPLRSAVKRRLRTRKVYYIEILEIDGRDVLFKVGVEAGTYIRSLIHHIGLALGVGAHMAELRRTRSGPFKEDETLVTLHDLVDYYHFWKEDGIEKYLRRAIQPMEKAVEHLPKIWIKDSAVAAVAHGANLTVPGIVKLNVGIKRGDLVAIMTLKDELVALGKAMMTSQEMMQRSKGIAVDVEKVFMPRDWYPKLW</sequence>
<gene>
    <name evidence="1" type="primary">truB</name>
    <name type="ordered locus">PH1644</name>
    <name type="ORF">PHAV051</name>
</gene>
<feature type="chain" id="PRO_0000121969" description="Probable tRNA pseudouridine synthase B">
    <location>
        <begin position="1"/>
        <end position="334"/>
    </location>
</feature>
<feature type="domain" description="PUA" evidence="1">
    <location>
        <begin position="250"/>
        <end position="325"/>
    </location>
</feature>
<feature type="active site" description="Nucleophile" evidence="1">
    <location>
        <position position="82"/>
    </location>
</feature>